<name>RS13_COXB2</name>
<sequence>MAARIAGVNIPVQKHARIALQAIYGIGNSRALEICKEAKIDPATKVKDLSEAELDALRTEVGKFSVEGDLRRERSMDIKRKMDLGTYEGIRHRRGLPLRGQRTRSNARTRKGKRKPIRS</sequence>
<organism>
    <name type="scientific">Coxiella burnetii (strain CbuG_Q212)</name>
    <name type="common">Coxiella burnetii (strain Q212)</name>
    <dbReference type="NCBI Taxonomy" id="434923"/>
    <lineage>
        <taxon>Bacteria</taxon>
        <taxon>Pseudomonadati</taxon>
        <taxon>Pseudomonadota</taxon>
        <taxon>Gammaproteobacteria</taxon>
        <taxon>Legionellales</taxon>
        <taxon>Coxiellaceae</taxon>
        <taxon>Coxiella</taxon>
    </lineage>
</organism>
<proteinExistence type="inferred from homology"/>
<comment type="function">
    <text evidence="1">Located at the top of the head of the 30S subunit, it contacts several helices of the 16S rRNA. In the 70S ribosome it contacts the 23S rRNA (bridge B1a) and protein L5 of the 50S subunit (bridge B1b), connecting the 2 subunits; these bridges are implicated in subunit movement. Contacts the tRNAs in the A and P-sites.</text>
</comment>
<comment type="subunit">
    <text evidence="1">Part of the 30S ribosomal subunit. Forms a loose heterodimer with protein S19. Forms two bridges to the 50S subunit in the 70S ribosome.</text>
</comment>
<comment type="similarity">
    <text evidence="1">Belongs to the universal ribosomal protein uS13 family.</text>
</comment>
<reference key="1">
    <citation type="journal article" date="2009" name="Infect. Immun.">
        <title>Comparative genomics reveal extensive transposon-mediated genomic plasticity and diversity among potential effector proteins within the genus Coxiella.</title>
        <authorList>
            <person name="Beare P.A."/>
            <person name="Unsworth N."/>
            <person name="Andoh M."/>
            <person name="Voth D.E."/>
            <person name="Omsland A."/>
            <person name="Gilk S.D."/>
            <person name="Williams K.P."/>
            <person name="Sobral B.W."/>
            <person name="Kupko J.J. III"/>
            <person name="Porcella S.F."/>
            <person name="Samuel J.E."/>
            <person name="Heinzen R.A."/>
        </authorList>
    </citation>
    <scope>NUCLEOTIDE SEQUENCE [LARGE SCALE GENOMIC DNA]</scope>
    <source>
        <strain>CbuG_Q212</strain>
    </source>
</reference>
<gene>
    <name evidence="1" type="primary">rpsM</name>
    <name type="ordered locus">CbuG_1745</name>
</gene>
<dbReference type="EMBL" id="CP001019">
    <property type="protein sequence ID" value="ACJ19019.1"/>
    <property type="molecule type" value="Genomic_DNA"/>
</dbReference>
<dbReference type="RefSeq" id="WP_005771503.1">
    <property type="nucleotide sequence ID" value="NC_011527.1"/>
</dbReference>
<dbReference type="SMR" id="B6J241"/>
<dbReference type="KEGG" id="cbg:CbuG_1745"/>
<dbReference type="HOGENOM" id="CLU_103849_1_2_6"/>
<dbReference type="GO" id="GO:0005829">
    <property type="term" value="C:cytosol"/>
    <property type="evidence" value="ECO:0007669"/>
    <property type="project" value="TreeGrafter"/>
</dbReference>
<dbReference type="GO" id="GO:0015935">
    <property type="term" value="C:small ribosomal subunit"/>
    <property type="evidence" value="ECO:0007669"/>
    <property type="project" value="TreeGrafter"/>
</dbReference>
<dbReference type="GO" id="GO:0019843">
    <property type="term" value="F:rRNA binding"/>
    <property type="evidence" value="ECO:0007669"/>
    <property type="project" value="UniProtKB-UniRule"/>
</dbReference>
<dbReference type="GO" id="GO:0003735">
    <property type="term" value="F:structural constituent of ribosome"/>
    <property type="evidence" value="ECO:0007669"/>
    <property type="project" value="InterPro"/>
</dbReference>
<dbReference type="GO" id="GO:0000049">
    <property type="term" value="F:tRNA binding"/>
    <property type="evidence" value="ECO:0007669"/>
    <property type="project" value="UniProtKB-UniRule"/>
</dbReference>
<dbReference type="GO" id="GO:0006412">
    <property type="term" value="P:translation"/>
    <property type="evidence" value="ECO:0007669"/>
    <property type="project" value="UniProtKB-UniRule"/>
</dbReference>
<dbReference type="FunFam" id="1.10.8.50:FF:000001">
    <property type="entry name" value="30S ribosomal protein S13"/>
    <property type="match status" value="1"/>
</dbReference>
<dbReference type="Gene3D" id="1.10.8.50">
    <property type="match status" value="1"/>
</dbReference>
<dbReference type="Gene3D" id="4.10.910.10">
    <property type="entry name" value="30s ribosomal protein s13, domain 2"/>
    <property type="match status" value="1"/>
</dbReference>
<dbReference type="HAMAP" id="MF_01315">
    <property type="entry name" value="Ribosomal_uS13"/>
    <property type="match status" value="1"/>
</dbReference>
<dbReference type="InterPro" id="IPR027437">
    <property type="entry name" value="Rbsml_uS13_C"/>
</dbReference>
<dbReference type="InterPro" id="IPR001892">
    <property type="entry name" value="Ribosomal_uS13"/>
</dbReference>
<dbReference type="InterPro" id="IPR010979">
    <property type="entry name" value="Ribosomal_uS13-like_H2TH"/>
</dbReference>
<dbReference type="InterPro" id="IPR019980">
    <property type="entry name" value="Ribosomal_uS13_bac-type"/>
</dbReference>
<dbReference type="InterPro" id="IPR018269">
    <property type="entry name" value="Ribosomal_uS13_CS"/>
</dbReference>
<dbReference type="NCBIfam" id="TIGR03631">
    <property type="entry name" value="uS13_bact"/>
    <property type="match status" value="1"/>
</dbReference>
<dbReference type="PANTHER" id="PTHR10871">
    <property type="entry name" value="30S RIBOSOMAL PROTEIN S13/40S RIBOSOMAL PROTEIN S18"/>
    <property type="match status" value="1"/>
</dbReference>
<dbReference type="PANTHER" id="PTHR10871:SF1">
    <property type="entry name" value="SMALL RIBOSOMAL SUBUNIT PROTEIN US13M"/>
    <property type="match status" value="1"/>
</dbReference>
<dbReference type="Pfam" id="PF00416">
    <property type="entry name" value="Ribosomal_S13"/>
    <property type="match status" value="1"/>
</dbReference>
<dbReference type="PIRSF" id="PIRSF002134">
    <property type="entry name" value="Ribosomal_S13"/>
    <property type="match status" value="1"/>
</dbReference>
<dbReference type="SUPFAM" id="SSF46946">
    <property type="entry name" value="S13-like H2TH domain"/>
    <property type="match status" value="1"/>
</dbReference>
<dbReference type="PROSITE" id="PS00646">
    <property type="entry name" value="RIBOSOMAL_S13_1"/>
    <property type="match status" value="1"/>
</dbReference>
<dbReference type="PROSITE" id="PS50159">
    <property type="entry name" value="RIBOSOMAL_S13_2"/>
    <property type="match status" value="1"/>
</dbReference>
<keyword id="KW-0687">Ribonucleoprotein</keyword>
<keyword id="KW-0689">Ribosomal protein</keyword>
<keyword id="KW-0694">RNA-binding</keyword>
<keyword id="KW-0699">rRNA-binding</keyword>
<keyword id="KW-0820">tRNA-binding</keyword>
<accession>B6J241</accession>
<protein>
    <recommendedName>
        <fullName evidence="1">Small ribosomal subunit protein uS13</fullName>
    </recommendedName>
    <alternativeName>
        <fullName evidence="3">30S ribosomal protein S13</fullName>
    </alternativeName>
</protein>
<evidence type="ECO:0000255" key="1">
    <source>
        <dbReference type="HAMAP-Rule" id="MF_01315"/>
    </source>
</evidence>
<evidence type="ECO:0000256" key="2">
    <source>
        <dbReference type="SAM" id="MobiDB-lite"/>
    </source>
</evidence>
<evidence type="ECO:0000305" key="3"/>
<feature type="chain" id="PRO_1000141249" description="Small ribosomal subunit protein uS13">
    <location>
        <begin position="1"/>
        <end position="119"/>
    </location>
</feature>
<feature type="region of interest" description="Disordered" evidence="2">
    <location>
        <begin position="90"/>
        <end position="119"/>
    </location>
</feature>
<feature type="compositionally biased region" description="Basic residues" evidence="2">
    <location>
        <begin position="91"/>
        <end position="119"/>
    </location>
</feature>